<feature type="chain" id="PRO_1000185848" description="Putative glutamate--cysteine ligase 2">
    <location>
        <begin position="1"/>
        <end position="372"/>
    </location>
</feature>
<reference key="1">
    <citation type="journal article" date="2009" name="PLoS Genet.">
        <title>Organised genome dynamics in the Escherichia coli species results in highly diverse adaptive paths.</title>
        <authorList>
            <person name="Touchon M."/>
            <person name="Hoede C."/>
            <person name="Tenaillon O."/>
            <person name="Barbe V."/>
            <person name="Baeriswyl S."/>
            <person name="Bidet P."/>
            <person name="Bingen E."/>
            <person name="Bonacorsi S."/>
            <person name="Bouchier C."/>
            <person name="Bouvet O."/>
            <person name="Calteau A."/>
            <person name="Chiapello H."/>
            <person name="Clermont O."/>
            <person name="Cruveiller S."/>
            <person name="Danchin A."/>
            <person name="Diard M."/>
            <person name="Dossat C."/>
            <person name="Karoui M.E."/>
            <person name="Frapy E."/>
            <person name="Garry L."/>
            <person name="Ghigo J.M."/>
            <person name="Gilles A.M."/>
            <person name="Johnson J."/>
            <person name="Le Bouguenec C."/>
            <person name="Lescat M."/>
            <person name="Mangenot S."/>
            <person name="Martinez-Jehanne V."/>
            <person name="Matic I."/>
            <person name="Nassif X."/>
            <person name="Oztas S."/>
            <person name="Petit M.A."/>
            <person name="Pichon C."/>
            <person name="Rouy Z."/>
            <person name="Ruf C.S."/>
            <person name="Schneider D."/>
            <person name="Tourret J."/>
            <person name="Vacherie B."/>
            <person name="Vallenet D."/>
            <person name="Medigue C."/>
            <person name="Rocha E.P.C."/>
            <person name="Denamur E."/>
        </authorList>
    </citation>
    <scope>NUCLEOTIDE SEQUENCE [LARGE SCALE GENOMIC DNA]</scope>
    <source>
        <strain>55989 / EAEC</strain>
    </source>
</reference>
<dbReference type="EC" id="6.3.2.2" evidence="1"/>
<dbReference type="EMBL" id="CU928145">
    <property type="protein sequence ID" value="CAU96445.1"/>
    <property type="molecule type" value="Genomic_DNA"/>
</dbReference>
<dbReference type="RefSeq" id="WP_001130622.1">
    <property type="nucleotide sequence ID" value="NC_011748.1"/>
</dbReference>
<dbReference type="SMR" id="B7L8G3"/>
<dbReference type="KEGG" id="eck:EC55989_0572"/>
<dbReference type="HOGENOM" id="CLU_044848_1_1_6"/>
<dbReference type="Proteomes" id="UP000000746">
    <property type="component" value="Chromosome"/>
</dbReference>
<dbReference type="GO" id="GO:0005524">
    <property type="term" value="F:ATP binding"/>
    <property type="evidence" value="ECO:0007669"/>
    <property type="project" value="UniProtKB-KW"/>
</dbReference>
<dbReference type="GO" id="GO:0004357">
    <property type="term" value="F:glutamate-cysteine ligase activity"/>
    <property type="evidence" value="ECO:0007669"/>
    <property type="project" value="UniProtKB-EC"/>
</dbReference>
<dbReference type="GO" id="GO:0042398">
    <property type="term" value="P:modified amino acid biosynthetic process"/>
    <property type="evidence" value="ECO:0007669"/>
    <property type="project" value="InterPro"/>
</dbReference>
<dbReference type="FunFam" id="3.30.590.20:FF:000002">
    <property type="entry name" value="Putative glutamate--cysteine ligase 2"/>
    <property type="match status" value="1"/>
</dbReference>
<dbReference type="Gene3D" id="3.30.590.20">
    <property type="match status" value="1"/>
</dbReference>
<dbReference type="HAMAP" id="MF_01609">
    <property type="entry name" value="Glu_cys_ligase_2"/>
    <property type="match status" value="1"/>
</dbReference>
<dbReference type="InterPro" id="IPR050141">
    <property type="entry name" value="GCL_type2/YbdK_subfam"/>
</dbReference>
<dbReference type="InterPro" id="IPR006336">
    <property type="entry name" value="GCS2"/>
</dbReference>
<dbReference type="InterPro" id="IPR014746">
    <property type="entry name" value="Gln_synth/guanido_kin_cat_dom"/>
</dbReference>
<dbReference type="InterPro" id="IPR011793">
    <property type="entry name" value="YbdK"/>
</dbReference>
<dbReference type="NCBIfam" id="TIGR02050">
    <property type="entry name" value="gshA_cyan_rel"/>
    <property type="match status" value="1"/>
</dbReference>
<dbReference type="NCBIfam" id="NF010040">
    <property type="entry name" value="PRK13516.1"/>
    <property type="match status" value="1"/>
</dbReference>
<dbReference type="PANTHER" id="PTHR36510">
    <property type="entry name" value="GLUTAMATE--CYSTEINE LIGASE 2-RELATED"/>
    <property type="match status" value="1"/>
</dbReference>
<dbReference type="PANTHER" id="PTHR36510:SF1">
    <property type="entry name" value="GLUTAMATE--CYSTEINE LIGASE 2-RELATED"/>
    <property type="match status" value="1"/>
</dbReference>
<dbReference type="Pfam" id="PF04107">
    <property type="entry name" value="GCS2"/>
    <property type="match status" value="1"/>
</dbReference>
<dbReference type="SUPFAM" id="SSF55931">
    <property type="entry name" value="Glutamine synthetase/guanido kinase"/>
    <property type="match status" value="1"/>
</dbReference>
<proteinExistence type="inferred from homology"/>
<keyword id="KW-0067">ATP-binding</keyword>
<keyword id="KW-0436">Ligase</keyword>
<keyword id="KW-0547">Nucleotide-binding</keyword>
<keyword id="KW-1185">Reference proteome</keyword>
<accession>B7L8G3</accession>
<protein>
    <recommendedName>
        <fullName evidence="1">Putative glutamate--cysteine ligase 2</fullName>
        <ecNumber evidence="1">6.3.2.2</ecNumber>
    </recommendedName>
    <alternativeName>
        <fullName evidence="1">Gamma-glutamylcysteine synthetase 2</fullName>
        <shortName evidence="1">GCS 2</shortName>
        <shortName evidence="1">Gamma-GCS 2</shortName>
    </alternativeName>
</protein>
<name>GCS2_ECO55</name>
<comment type="function">
    <text evidence="1">ATP-dependent carboxylate-amine ligase which exhibits weak glutamate--cysteine ligase activity.</text>
</comment>
<comment type="catalytic activity">
    <reaction evidence="1">
        <text>L-cysteine + L-glutamate + ATP = gamma-L-glutamyl-L-cysteine + ADP + phosphate + H(+)</text>
        <dbReference type="Rhea" id="RHEA:13285"/>
        <dbReference type="ChEBI" id="CHEBI:15378"/>
        <dbReference type="ChEBI" id="CHEBI:29985"/>
        <dbReference type="ChEBI" id="CHEBI:30616"/>
        <dbReference type="ChEBI" id="CHEBI:35235"/>
        <dbReference type="ChEBI" id="CHEBI:43474"/>
        <dbReference type="ChEBI" id="CHEBI:58173"/>
        <dbReference type="ChEBI" id="CHEBI:456216"/>
        <dbReference type="EC" id="6.3.2.2"/>
    </reaction>
</comment>
<comment type="subunit">
    <text evidence="1">Homodimer.</text>
</comment>
<comment type="similarity">
    <text evidence="1">Belongs to the glutamate--cysteine ligase type 2 family. YbdK subfamily.</text>
</comment>
<evidence type="ECO:0000255" key="1">
    <source>
        <dbReference type="HAMAP-Rule" id="MF_01609"/>
    </source>
</evidence>
<sequence length="372" mass="41691">MPLPDFHVSEPFTLGIELEMQVVNPPGYDLSQDSSMLIDAVKNEITAGEVKHDITESMLELATDVCRDINQAAGQFSAMQKVVLQAAADHHLEICGGGTHPFQKWQRQEVCENERYQRTLENFGYLIQQATVFGQHVHVGCASGDDAIYLLHGLSRFVPHFIALSAASPYMQGTDTRFASSRPNIFSAFPDNGPMPWVSNWQQFEALFRCLSYTTMIDSIKDLHWDIRPSPHFGTVEVRVMDTPLTLSHAVNMAGLIQATAHWLLTERPFKHQEKDYLLYKFNRFQACRYGLEGVITDPHTGDRRPLTEDTLRLLEKIAPSAHKMGASSAIEALHRQVVSGLNEAQLMRDFVADGGSLIGLVKKHCEIWAGD</sequence>
<organism>
    <name type="scientific">Escherichia coli (strain 55989 / EAEC)</name>
    <dbReference type="NCBI Taxonomy" id="585055"/>
    <lineage>
        <taxon>Bacteria</taxon>
        <taxon>Pseudomonadati</taxon>
        <taxon>Pseudomonadota</taxon>
        <taxon>Gammaproteobacteria</taxon>
        <taxon>Enterobacterales</taxon>
        <taxon>Enterobacteriaceae</taxon>
        <taxon>Escherichia</taxon>
    </lineage>
</organism>
<gene>
    <name type="primary">ybdK</name>
    <name type="ordered locus">EC55989_0572</name>
</gene>